<dbReference type="EMBL" id="AF411191">
    <property type="protein sequence ID" value="AAL05571.1"/>
    <property type="molecule type" value="mRNA"/>
</dbReference>
<dbReference type="EMBL" id="AC090307">
    <property type="status" value="NOT_ANNOTATED_CDS"/>
    <property type="molecule type" value="Genomic_DNA"/>
</dbReference>
<dbReference type="EMBL" id="BC103885">
    <property type="protein sequence ID" value="AAI03886.1"/>
    <property type="molecule type" value="mRNA"/>
</dbReference>
<dbReference type="CCDS" id="CCDS11984.1">
    <molecule id="Q96P63-1"/>
</dbReference>
<dbReference type="CCDS" id="CCDS77194.1">
    <molecule id="Q96P63-2"/>
</dbReference>
<dbReference type="RefSeq" id="NP_001294857.1">
    <molecule id="Q96P63-2"/>
    <property type="nucleotide sequence ID" value="NM_001307928.2"/>
</dbReference>
<dbReference type="RefSeq" id="NP_536722.1">
    <molecule id="Q96P63-1"/>
    <property type="nucleotide sequence ID" value="NM_080474.2"/>
</dbReference>
<dbReference type="RefSeq" id="XP_011524550.1">
    <molecule id="Q96P63-2"/>
    <property type="nucleotide sequence ID" value="XM_011526248.2"/>
</dbReference>
<dbReference type="RefSeq" id="XP_011524551.1">
    <molecule id="Q96P63-2"/>
    <property type="nucleotide sequence ID" value="XM_011526249.1"/>
</dbReference>
<dbReference type="RefSeq" id="XP_016881556.1">
    <property type="nucleotide sequence ID" value="XM_017026067.1"/>
</dbReference>
<dbReference type="RefSeq" id="XP_054175299.1">
    <molecule id="Q96P63-2"/>
    <property type="nucleotide sequence ID" value="XM_054319324.1"/>
</dbReference>
<dbReference type="RefSeq" id="XP_054175300.1">
    <molecule id="Q96P63-2"/>
    <property type="nucleotide sequence ID" value="XM_054319325.1"/>
</dbReference>
<dbReference type="SMR" id="Q96P63"/>
<dbReference type="BioGRID" id="124597">
    <property type="interactions" value="126"/>
</dbReference>
<dbReference type="FunCoup" id="Q96P63">
    <property type="interactions" value="372"/>
</dbReference>
<dbReference type="IntAct" id="Q96P63">
    <property type="interactions" value="38"/>
</dbReference>
<dbReference type="MINT" id="Q96P63"/>
<dbReference type="STRING" id="9606.ENSP00000372218"/>
<dbReference type="MEROPS" id="I04.016"/>
<dbReference type="GlyGen" id="Q96P63">
    <property type="glycosylation" value="1 site, 1 O-linked glycan (1 site)"/>
</dbReference>
<dbReference type="iPTMnet" id="Q96P63"/>
<dbReference type="PhosphoSitePlus" id="Q96P63"/>
<dbReference type="SwissPalm" id="Q96P63"/>
<dbReference type="BioMuta" id="SERPINB12"/>
<dbReference type="DMDM" id="20140145"/>
<dbReference type="jPOST" id="Q96P63"/>
<dbReference type="MassIVE" id="Q96P63"/>
<dbReference type="PaxDb" id="9606-ENSP00000269491"/>
<dbReference type="PeptideAtlas" id="Q96P63"/>
<dbReference type="ProteomicsDB" id="61854"/>
<dbReference type="ProteomicsDB" id="77637">
    <molecule id="Q96P63-1"/>
</dbReference>
<dbReference type="Antibodypedia" id="10036">
    <property type="antibodies" value="201 antibodies from 23 providers"/>
</dbReference>
<dbReference type="DNASU" id="89777"/>
<dbReference type="Ensembl" id="ENST00000269491.6">
    <molecule id="Q96P63-1"/>
    <property type="protein sequence ID" value="ENSP00000269491.1"/>
    <property type="gene ID" value="ENSG00000166634.7"/>
</dbReference>
<dbReference type="Ensembl" id="ENST00000382768.2">
    <molecule id="Q96P63-2"/>
    <property type="protein sequence ID" value="ENSP00000372218.1"/>
    <property type="gene ID" value="ENSG00000166634.7"/>
</dbReference>
<dbReference type="GeneID" id="89777"/>
<dbReference type="KEGG" id="hsa:89777"/>
<dbReference type="MANE-Select" id="ENST00000382768.2">
    <molecule id="Q96P63-2"/>
    <property type="protein sequence ID" value="ENSP00000372218.1"/>
    <property type="RefSeq nucleotide sequence ID" value="NM_001307928.2"/>
    <property type="RefSeq protein sequence ID" value="NP_001294857.1"/>
</dbReference>
<dbReference type="UCSC" id="uc010xen.2">
    <molecule id="Q96P63-1"/>
    <property type="organism name" value="human"/>
</dbReference>
<dbReference type="AGR" id="HGNC:14220"/>
<dbReference type="CTD" id="89777"/>
<dbReference type="DisGeNET" id="89777"/>
<dbReference type="GeneCards" id="SERPINB12"/>
<dbReference type="HGNC" id="HGNC:14220">
    <property type="gene designation" value="SERPINB12"/>
</dbReference>
<dbReference type="HPA" id="ENSG00000166634">
    <property type="expression patterns" value="Tissue enhanced (cervix, skin, vagina)"/>
</dbReference>
<dbReference type="MIM" id="615662">
    <property type="type" value="gene"/>
</dbReference>
<dbReference type="neXtProt" id="NX_Q96P63"/>
<dbReference type="OpenTargets" id="ENSG00000166634"/>
<dbReference type="PharmGKB" id="PA37859"/>
<dbReference type="VEuPathDB" id="HostDB:ENSG00000166634"/>
<dbReference type="eggNOG" id="KOG2392">
    <property type="taxonomic scope" value="Eukaryota"/>
</dbReference>
<dbReference type="GeneTree" id="ENSGT00940000161829"/>
<dbReference type="HOGENOM" id="CLU_023330_0_2_1"/>
<dbReference type="InParanoid" id="Q96P63"/>
<dbReference type="OMA" id="CYFGKLL"/>
<dbReference type="OrthoDB" id="671595at2759"/>
<dbReference type="PAN-GO" id="Q96P63">
    <property type="GO annotations" value="3 GO annotations based on evolutionary models"/>
</dbReference>
<dbReference type="PhylomeDB" id="Q96P63"/>
<dbReference type="TreeFam" id="TF352619"/>
<dbReference type="PathwayCommons" id="Q96P63"/>
<dbReference type="Reactome" id="R-HSA-6798695">
    <property type="pathway name" value="Neutrophil degranulation"/>
</dbReference>
<dbReference type="SignaLink" id="Q96P63"/>
<dbReference type="BioGRID-ORCS" id="89777">
    <property type="hits" value="11 hits in 1137 CRISPR screens"/>
</dbReference>
<dbReference type="CD-CODE" id="232F8A39">
    <property type="entry name" value="P-body"/>
</dbReference>
<dbReference type="ChiTaRS" id="SERPINB12">
    <property type="organism name" value="human"/>
</dbReference>
<dbReference type="GenomeRNAi" id="89777"/>
<dbReference type="Pharos" id="Q96P63">
    <property type="development level" value="Tbio"/>
</dbReference>
<dbReference type="PRO" id="PR:Q96P63"/>
<dbReference type="Proteomes" id="UP000005640">
    <property type="component" value="Chromosome 18"/>
</dbReference>
<dbReference type="RNAct" id="Q96P63">
    <property type="molecule type" value="protein"/>
</dbReference>
<dbReference type="Bgee" id="ENSG00000166634">
    <property type="expression patterns" value="Expressed in skin of leg and 41 other cell types or tissues"/>
</dbReference>
<dbReference type="GO" id="GO:0062023">
    <property type="term" value="C:collagen-containing extracellular matrix"/>
    <property type="evidence" value="ECO:0007005"/>
    <property type="project" value="BHF-UCL"/>
</dbReference>
<dbReference type="GO" id="GO:0001533">
    <property type="term" value="C:cornified envelope"/>
    <property type="evidence" value="ECO:0007669"/>
    <property type="project" value="Ensembl"/>
</dbReference>
<dbReference type="GO" id="GO:0005737">
    <property type="term" value="C:cytoplasm"/>
    <property type="evidence" value="ECO:0000303"/>
    <property type="project" value="UniProtKB"/>
</dbReference>
<dbReference type="GO" id="GO:0005615">
    <property type="term" value="C:extracellular space"/>
    <property type="evidence" value="ECO:0000318"/>
    <property type="project" value="GO_Central"/>
</dbReference>
<dbReference type="GO" id="GO:0101003">
    <property type="term" value="C:ficolin-1-rich granule membrane"/>
    <property type="evidence" value="ECO:0000304"/>
    <property type="project" value="Reactome"/>
</dbReference>
<dbReference type="GO" id="GO:0005886">
    <property type="term" value="C:plasma membrane"/>
    <property type="evidence" value="ECO:0000304"/>
    <property type="project" value="Reactome"/>
</dbReference>
<dbReference type="GO" id="GO:0019899">
    <property type="term" value="F:enzyme binding"/>
    <property type="evidence" value="ECO:0000303"/>
    <property type="project" value="UniProtKB"/>
</dbReference>
<dbReference type="GO" id="GO:0004867">
    <property type="term" value="F:serine-type endopeptidase inhibitor activity"/>
    <property type="evidence" value="ECO:0000315"/>
    <property type="project" value="UniProtKB"/>
</dbReference>
<dbReference type="GO" id="GO:0002244">
    <property type="term" value="P:hematopoietic progenitor cell differentiation"/>
    <property type="evidence" value="ECO:0007669"/>
    <property type="project" value="Ensembl"/>
</dbReference>
<dbReference type="GO" id="GO:0042177">
    <property type="term" value="P:negative regulation of protein catabolic process"/>
    <property type="evidence" value="ECO:0000303"/>
    <property type="project" value="UniProtKB"/>
</dbReference>
<dbReference type="CDD" id="cd19571">
    <property type="entry name" value="serpinB12_yukopin"/>
    <property type="match status" value="1"/>
</dbReference>
<dbReference type="FunFam" id="2.30.39.10:FF:000050">
    <property type="entry name" value="Heterochromatin-associated protein MENT"/>
    <property type="match status" value="1"/>
</dbReference>
<dbReference type="FunFam" id="2.10.310.10:FF:000001">
    <property type="entry name" value="Serpin family A member 1"/>
    <property type="match status" value="1"/>
</dbReference>
<dbReference type="FunFam" id="3.30.497.10:FF:000038">
    <property type="entry name" value="Serpin peptidase inhibitor, clade B (ovalbumin), member 4"/>
    <property type="match status" value="1"/>
</dbReference>
<dbReference type="Gene3D" id="2.30.39.10">
    <property type="entry name" value="Alpha-1-antitrypsin, domain 1"/>
    <property type="match status" value="1"/>
</dbReference>
<dbReference type="Gene3D" id="3.30.497.10">
    <property type="entry name" value="Antithrombin, subunit I, domain 2"/>
    <property type="match status" value="1"/>
</dbReference>
<dbReference type="InterPro" id="IPR023795">
    <property type="entry name" value="Serpin_CS"/>
</dbReference>
<dbReference type="InterPro" id="IPR023796">
    <property type="entry name" value="Serpin_dom"/>
</dbReference>
<dbReference type="InterPro" id="IPR000215">
    <property type="entry name" value="Serpin_fam"/>
</dbReference>
<dbReference type="InterPro" id="IPR036186">
    <property type="entry name" value="Serpin_sf"/>
</dbReference>
<dbReference type="InterPro" id="IPR042178">
    <property type="entry name" value="Serpin_sf_1"/>
</dbReference>
<dbReference type="InterPro" id="IPR042185">
    <property type="entry name" value="Serpin_sf_2"/>
</dbReference>
<dbReference type="PANTHER" id="PTHR11461">
    <property type="entry name" value="SERINE PROTEASE INHIBITOR, SERPIN"/>
    <property type="match status" value="1"/>
</dbReference>
<dbReference type="PANTHER" id="PTHR11461:SF125">
    <property type="entry name" value="SERPIN B12"/>
    <property type="match status" value="1"/>
</dbReference>
<dbReference type="Pfam" id="PF00079">
    <property type="entry name" value="Serpin"/>
    <property type="match status" value="1"/>
</dbReference>
<dbReference type="SMART" id="SM00093">
    <property type="entry name" value="SERPIN"/>
    <property type="match status" value="1"/>
</dbReference>
<dbReference type="SUPFAM" id="SSF56574">
    <property type="entry name" value="Serpins"/>
    <property type="match status" value="1"/>
</dbReference>
<dbReference type="PROSITE" id="PS00284">
    <property type="entry name" value="SERPIN"/>
    <property type="match status" value="1"/>
</dbReference>
<organism>
    <name type="scientific">Homo sapiens</name>
    <name type="common">Human</name>
    <dbReference type="NCBI Taxonomy" id="9606"/>
    <lineage>
        <taxon>Eukaryota</taxon>
        <taxon>Metazoa</taxon>
        <taxon>Chordata</taxon>
        <taxon>Craniata</taxon>
        <taxon>Vertebrata</taxon>
        <taxon>Euteleostomi</taxon>
        <taxon>Mammalia</taxon>
        <taxon>Eutheria</taxon>
        <taxon>Euarchontoglires</taxon>
        <taxon>Primates</taxon>
        <taxon>Haplorrhini</taxon>
        <taxon>Catarrhini</taxon>
        <taxon>Hominidae</taxon>
        <taxon>Homo</taxon>
    </lineage>
</organism>
<name>SPB12_HUMAN</name>
<gene>
    <name type="primary">SERPINB12</name>
</gene>
<protein>
    <recommendedName>
        <fullName>Serpin B12</fullName>
    </recommendedName>
</protein>
<proteinExistence type="evidence at protein level"/>
<feature type="chain" id="PRO_0000094119" description="Serpin B12">
    <location>
        <begin position="1"/>
        <end position="405"/>
    </location>
</feature>
<feature type="region of interest" description="Disordered" evidence="2">
    <location>
        <begin position="64"/>
        <end position="83"/>
    </location>
</feature>
<feature type="site" description="Reactive bond" evidence="1">
    <location>
        <begin position="370"/>
        <end position="371"/>
    </location>
</feature>
<feature type="splice variant" id="VSP_056279" description="In isoform 2." evidence="5">
    <original>K</original>
    <variation>KVLADSSLEGQKKTTEPLDQQ</variation>
    <location>
        <position position="81"/>
    </location>
</feature>
<feature type="sequence variant" id="VAR_034513" description="In dbSNP:rs35582068.">
    <original>K</original>
    <variation>E</variation>
    <location>
        <position position="227"/>
    </location>
</feature>
<feature type="sequence variant" id="VAR_034514" description="In dbSNP:rs35352345.">
    <original>N</original>
    <variation>T</variation>
    <location>
        <position position="289"/>
    </location>
</feature>
<feature type="sequence variant" id="VAR_051952" description="In dbSNP:rs11664907.">
    <original>N</original>
    <variation>S</variation>
    <location>
        <position position="338"/>
    </location>
</feature>
<keyword id="KW-0025">Alternative splicing</keyword>
<keyword id="KW-0963">Cytoplasm</keyword>
<keyword id="KW-0646">Protease inhibitor</keyword>
<keyword id="KW-1267">Proteomics identification</keyword>
<keyword id="KW-1185">Reference proteome</keyword>
<keyword id="KW-0722">Serine protease inhibitor</keyword>
<accession>Q96P63</accession>
<accession>Q3SYB4</accession>
<sequence>MDSLVTANTKFCFDLFQEIGKDDRHKNIFFSPLSLSAALGMVRLGARSDSAHQIDEVLHFNEFSQNESKEPDPCLKSNKQKAGSLNNESGLVSCYFGQLLSKLDRIKTDYTLSIANRLYGEQEFPICQEYLDGVIQFYHTTIESVDFQKNPEKSRQEINFWVECQSQGKIKELFSKDAINAETVLVLVNAVYFKAKWETYFDHENTVDAPFCLNANENKSVKMMTQKGLYRIGFIEEVKAQILEMRYTKGKLSMFVLLPSHSKDNLKGLEELERKITYEKMVAWSSSENMSEESVVLSFPRFTLEDSYDLNSILQDMGITDIFDETRADLTGISPSPNLYLSKIIHKTFVEVDENGTQAAAATGAVVSERSLRSWVEFNANHPFLFFIRHNKTQTILFYGRVCSP</sequence>
<evidence type="ECO:0000250" key="1"/>
<evidence type="ECO:0000256" key="2">
    <source>
        <dbReference type="SAM" id="MobiDB-lite"/>
    </source>
</evidence>
<evidence type="ECO:0000269" key="3">
    <source>
    </source>
</evidence>
<evidence type="ECO:0000269" key="4">
    <source>
    </source>
</evidence>
<evidence type="ECO:0000303" key="5">
    <source>
    </source>
</evidence>
<evidence type="ECO:0000305" key="6"/>
<comment type="function">
    <text evidence="3 4">Inhibits trypsin and plasmin, but not thrombin, coagulation factor Xa, or urokinase-type plasminogen activator (PubMed:11604408). May play a role in cell differentiation (PubMed:30045019).</text>
</comment>
<comment type="subunit">
    <text evidence="4">Interacts with SLFN12; as part of a pathway regulating cell differentiation (PubMed:30045019). May interact with USP14 (PubMed:30045019).</text>
</comment>
<comment type="subcellular location">
    <subcellularLocation>
        <location evidence="1">Cytoplasm</location>
    </subcellularLocation>
</comment>
<comment type="alternative products">
    <event type="alternative splicing"/>
    <isoform>
        <id>Q96P63-1</id>
        <name>1</name>
        <sequence type="displayed"/>
    </isoform>
    <isoform>
        <id>Q96P63-2</id>
        <name>2</name>
        <sequence type="described" ref="VSP_056279"/>
    </isoform>
</comment>
<comment type="tissue specificity">
    <text evidence="3">Expressed in many tissues, including brain, bone marrow, lymph node, heart, lung, liver, pancreas, testis, ovary, and intestine.</text>
</comment>
<comment type="similarity">
    <text evidence="6">Belongs to the serpin family. Ov-serpin subfamily.</text>
</comment>
<reference key="1">
    <citation type="journal article" date="2001" name="J. Biol. Chem.">
        <title>SERPINB12 is a novel member of the human ov-serpin family that is widely expressed and inhibits trypsin-like serine proteinases.</title>
        <authorList>
            <person name="Askew Y.S."/>
            <person name="Pak S.C."/>
            <person name="Luke C.J."/>
            <person name="Askew D.J."/>
            <person name="Cataltepe S."/>
            <person name="Mills D.R."/>
            <person name="Kato H."/>
            <person name="Lehoczky J."/>
            <person name="Dewar K."/>
            <person name="Birren B."/>
            <person name="Silverman G.A."/>
        </authorList>
    </citation>
    <scope>NUCLEOTIDE SEQUENCE [MRNA] (ISOFORM 1)</scope>
    <scope>FUNCTION</scope>
    <scope>TISSUE SPECIFICITY</scope>
</reference>
<reference key="2">
    <citation type="journal article" date="2005" name="Nature">
        <title>DNA sequence and analysis of human chromosome 18.</title>
        <authorList>
            <person name="Nusbaum C."/>
            <person name="Zody M.C."/>
            <person name="Borowsky M.L."/>
            <person name="Kamal M."/>
            <person name="Kodira C.D."/>
            <person name="Taylor T.D."/>
            <person name="Whittaker C.A."/>
            <person name="Chang J.L."/>
            <person name="Cuomo C.A."/>
            <person name="Dewar K."/>
            <person name="FitzGerald M.G."/>
            <person name="Yang X."/>
            <person name="Abouelleil A."/>
            <person name="Allen N.R."/>
            <person name="Anderson S."/>
            <person name="Bloom T."/>
            <person name="Bugalter B."/>
            <person name="Butler J."/>
            <person name="Cook A."/>
            <person name="DeCaprio D."/>
            <person name="Engels R."/>
            <person name="Garber M."/>
            <person name="Gnirke A."/>
            <person name="Hafez N."/>
            <person name="Hall J.L."/>
            <person name="Norman C.H."/>
            <person name="Itoh T."/>
            <person name="Jaffe D.B."/>
            <person name="Kuroki Y."/>
            <person name="Lehoczky J."/>
            <person name="Lui A."/>
            <person name="Macdonald P."/>
            <person name="Mauceli E."/>
            <person name="Mikkelsen T.S."/>
            <person name="Naylor J.W."/>
            <person name="Nicol R."/>
            <person name="Nguyen C."/>
            <person name="Noguchi H."/>
            <person name="O'Leary S.B."/>
            <person name="Piqani B."/>
            <person name="Smith C.L."/>
            <person name="Talamas J.A."/>
            <person name="Topham K."/>
            <person name="Totoki Y."/>
            <person name="Toyoda A."/>
            <person name="Wain H.M."/>
            <person name="Young S.K."/>
            <person name="Zeng Q."/>
            <person name="Zimmer A.R."/>
            <person name="Fujiyama A."/>
            <person name="Hattori M."/>
            <person name="Birren B.W."/>
            <person name="Sakaki Y."/>
            <person name="Lander E.S."/>
        </authorList>
    </citation>
    <scope>NUCLEOTIDE SEQUENCE [LARGE SCALE GENOMIC DNA]</scope>
</reference>
<reference key="3">
    <citation type="journal article" date="2004" name="Genome Res.">
        <title>The status, quality, and expansion of the NIH full-length cDNA project: the Mammalian Gene Collection (MGC).</title>
        <authorList>
            <consortium name="The MGC Project Team"/>
        </authorList>
    </citation>
    <scope>NUCLEOTIDE SEQUENCE [LARGE SCALE MRNA] (ISOFORM 2)</scope>
</reference>
<reference key="4">
    <citation type="journal article" date="2018" name="Cell. Physiol. Biochem.">
        <title>Schlafen 12 Interaction with SerpinB12 and Deubiquitylases Drives Human Enterocyte Differentiation.</title>
        <authorList>
            <person name="Basson M.D."/>
            <person name="Wang Q."/>
            <person name="Chaturvedi L.S."/>
            <person name="More S."/>
            <person name="Vomhof-DeKrey E.E."/>
            <person name="Al-Marsoummi S."/>
            <person name="Sun K."/>
            <person name="Kuhn L.A."/>
            <person name="Kovalenko P."/>
            <person name="Kiupel M."/>
        </authorList>
    </citation>
    <scope>INTERACTION WITH SLFN12 AND USP14</scope>
</reference>